<proteinExistence type="inferred from homology"/>
<dbReference type="EC" id="2.1.1.170" evidence="1"/>
<dbReference type="EMBL" id="CP000555">
    <property type="protein sequence ID" value="ABM96739.1"/>
    <property type="molecule type" value="Genomic_DNA"/>
</dbReference>
<dbReference type="RefSeq" id="WP_011831359.1">
    <property type="nucleotide sequence ID" value="NC_008825.1"/>
</dbReference>
<dbReference type="SMR" id="A2SMF0"/>
<dbReference type="STRING" id="420662.Mpe_A3786"/>
<dbReference type="KEGG" id="mpt:Mpe_A3786"/>
<dbReference type="eggNOG" id="COG0357">
    <property type="taxonomic scope" value="Bacteria"/>
</dbReference>
<dbReference type="HOGENOM" id="CLU_065341_2_0_4"/>
<dbReference type="Proteomes" id="UP000000366">
    <property type="component" value="Chromosome"/>
</dbReference>
<dbReference type="GO" id="GO:0005829">
    <property type="term" value="C:cytosol"/>
    <property type="evidence" value="ECO:0007669"/>
    <property type="project" value="TreeGrafter"/>
</dbReference>
<dbReference type="GO" id="GO:0070043">
    <property type="term" value="F:rRNA (guanine-N7-)-methyltransferase activity"/>
    <property type="evidence" value="ECO:0007669"/>
    <property type="project" value="UniProtKB-UniRule"/>
</dbReference>
<dbReference type="Gene3D" id="3.40.50.150">
    <property type="entry name" value="Vaccinia Virus protein VP39"/>
    <property type="match status" value="1"/>
</dbReference>
<dbReference type="HAMAP" id="MF_00074">
    <property type="entry name" value="16SrRNA_methyltr_G"/>
    <property type="match status" value="1"/>
</dbReference>
<dbReference type="InterPro" id="IPR003682">
    <property type="entry name" value="rRNA_ssu_MeTfrase_G"/>
</dbReference>
<dbReference type="InterPro" id="IPR029063">
    <property type="entry name" value="SAM-dependent_MTases_sf"/>
</dbReference>
<dbReference type="NCBIfam" id="TIGR00138">
    <property type="entry name" value="rsmG_gidB"/>
    <property type="match status" value="1"/>
</dbReference>
<dbReference type="PANTHER" id="PTHR31760">
    <property type="entry name" value="S-ADENOSYL-L-METHIONINE-DEPENDENT METHYLTRANSFERASES SUPERFAMILY PROTEIN"/>
    <property type="match status" value="1"/>
</dbReference>
<dbReference type="PANTHER" id="PTHR31760:SF0">
    <property type="entry name" value="S-ADENOSYL-L-METHIONINE-DEPENDENT METHYLTRANSFERASES SUPERFAMILY PROTEIN"/>
    <property type="match status" value="1"/>
</dbReference>
<dbReference type="Pfam" id="PF02527">
    <property type="entry name" value="GidB"/>
    <property type="match status" value="1"/>
</dbReference>
<dbReference type="PIRSF" id="PIRSF003078">
    <property type="entry name" value="GidB"/>
    <property type="match status" value="1"/>
</dbReference>
<dbReference type="SUPFAM" id="SSF53335">
    <property type="entry name" value="S-adenosyl-L-methionine-dependent methyltransferases"/>
    <property type="match status" value="1"/>
</dbReference>
<keyword id="KW-0963">Cytoplasm</keyword>
<keyword id="KW-0489">Methyltransferase</keyword>
<keyword id="KW-1185">Reference proteome</keyword>
<keyword id="KW-0698">rRNA processing</keyword>
<keyword id="KW-0949">S-adenosyl-L-methionine</keyword>
<keyword id="KW-0808">Transferase</keyword>
<gene>
    <name evidence="1" type="primary">rsmG</name>
    <name type="ordered locus">Mpe_A3786</name>
</gene>
<evidence type="ECO:0000255" key="1">
    <source>
        <dbReference type="HAMAP-Rule" id="MF_00074"/>
    </source>
</evidence>
<reference key="1">
    <citation type="journal article" date="2007" name="J. Bacteriol.">
        <title>Whole-genome analysis of the methyl tert-butyl ether-degrading beta-proteobacterium Methylibium petroleiphilum PM1.</title>
        <authorList>
            <person name="Kane S.R."/>
            <person name="Chakicherla A.Y."/>
            <person name="Chain P.S.G."/>
            <person name="Schmidt R."/>
            <person name="Shin M.W."/>
            <person name="Legler T.C."/>
            <person name="Scow K.M."/>
            <person name="Larimer F.W."/>
            <person name="Lucas S.M."/>
            <person name="Richardson P.M."/>
            <person name="Hristova K.R."/>
        </authorList>
    </citation>
    <scope>NUCLEOTIDE SEQUENCE [LARGE SCALE GENOMIC DNA]</scope>
    <source>
        <strain>ATCC BAA-1232 / LMG 22953 / PM1</strain>
    </source>
</reference>
<accession>A2SMF0</accession>
<name>RSMG_METPP</name>
<feature type="chain" id="PRO_1000010170" description="Ribosomal RNA small subunit methyltransferase G">
    <location>
        <begin position="1"/>
        <end position="221"/>
    </location>
</feature>
<feature type="binding site" evidence="1">
    <location>
        <position position="89"/>
    </location>
    <ligand>
        <name>S-adenosyl-L-methionine</name>
        <dbReference type="ChEBI" id="CHEBI:59789"/>
    </ligand>
</feature>
<feature type="binding site" evidence="1">
    <location>
        <position position="94"/>
    </location>
    <ligand>
        <name>S-adenosyl-L-methionine</name>
        <dbReference type="ChEBI" id="CHEBI:59789"/>
    </ligand>
</feature>
<feature type="binding site" evidence="1">
    <location>
        <begin position="140"/>
        <end position="141"/>
    </location>
    <ligand>
        <name>S-adenosyl-L-methionine</name>
        <dbReference type="ChEBI" id="CHEBI:59789"/>
    </ligand>
</feature>
<feature type="binding site" evidence="1">
    <location>
        <position position="154"/>
    </location>
    <ligand>
        <name>S-adenosyl-L-methionine</name>
        <dbReference type="ChEBI" id="CHEBI:59789"/>
    </ligand>
</feature>
<comment type="function">
    <text evidence="1">Specifically methylates the N7 position of guanine in position 527 of 16S rRNA.</text>
</comment>
<comment type="catalytic activity">
    <reaction evidence="1">
        <text>guanosine(527) in 16S rRNA + S-adenosyl-L-methionine = N(7)-methylguanosine(527) in 16S rRNA + S-adenosyl-L-homocysteine</text>
        <dbReference type="Rhea" id="RHEA:42732"/>
        <dbReference type="Rhea" id="RHEA-COMP:10209"/>
        <dbReference type="Rhea" id="RHEA-COMP:10210"/>
        <dbReference type="ChEBI" id="CHEBI:57856"/>
        <dbReference type="ChEBI" id="CHEBI:59789"/>
        <dbReference type="ChEBI" id="CHEBI:74269"/>
        <dbReference type="ChEBI" id="CHEBI:74480"/>
        <dbReference type="EC" id="2.1.1.170"/>
    </reaction>
</comment>
<comment type="subcellular location">
    <subcellularLocation>
        <location evidence="1">Cytoplasm</location>
    </subcellularLocation>
</comment>
<comment type="similarity">
    <text evidence="1">Belongs to the methyltransferase superfamily. RNA methyltransferase RsmG family.</text>
</comment>
<protein>
    <recommendedName>
        <fullName evidence="1">Ribosomal RNA small subunit methyltransferase G</fullName>
        <ecNumber evidence="1">2.1.1.170</ecNumber>
    </recommendedName>
    <alternativeName>
        <fullName evidence="1">16S rRNA 7-methylguanosine methyltransferase</fullName>
        <shortName evidence="1">16S rRNA m7G methyltransferase</shortName>
    </alternativeName>
</protein>
<sequence length="221" mass="23869">MTVAPFDAKALAQGLEQGAQALRLELTAVQQQQLLQHLALIDRWNRVYNLTAVREPAQMLTQHLLDSLAVVAPLRRQTRATAIALLDVGSGAGLPGVAIAVACPEIHVSCVDTVSKKASFIRQVGVELGLTHFQALHARVESLASSNFDVITSRAFASLADFVTLTEAALAPDGVWMAMKGQVPHEEMAVLPSSIEVFHVEPLQVPGLDAERCIVWMHRKG</sequence>
<organism>
    <name type="scientific">Methylibium petroleiphilum (strain ATCC BAA-1232 / LMG 22953 / PM1)</name>
    <dbReference type="NCBI Taxonomy" id="420662"/>
    <lineage>
        <taxon>Bacteria</taxon>
        <taxon>Pseudomonadati</taxon>
        <taxon>Pseudomonadota</taxon>
        <taxon>Betaproteobacteria</taxon>
        <taxon>Burkholderiales</taxon>
        <taxon>Sphaerotilaceae</taxon>
        <taxon>Methylibium</taxon>
    </lineage>
</organism>